<sequence>MKLSRRSFMKANAVAAAAAAAGLSVPGVARAVVGQQEAIKWDKAPCRFCGTGCGVLVGTQQGRVVACQGDPDAPVNRGLNCIKGYFLPKIMYGKDRLTQPLLRMKNGKYDKEGEFTPITWDQAFDVMEEKFKTALKEKGPESIGMFGSGQWTIWEGYAASKLFKAGFRSNNIDPNARHCMASAVVGFMRTFGMDEPMGCYDDIEQADAFVLWGANMAEMHPILWSRITNRRLSNQNVTVAVLSTYQHRSFELADNGIIFTPQSDLVILNYIANYIIQNNAINQDFFSKHVNLRKGATDIGYGLRPTHPLEKAAKNPGSDASEPMSFEDYKAFVAEYTLEKTAEMTGVPKDQLEQLAQLYADPNKKVISYWTMGFNQHTRGVWANNLVYNLHLLTGKISQPGCGPFSLTGQPSACGTAREVGTFAHRLPADMVVTNEKHRDICEKKWNIPSGTIPAKIGLHAVAQDRALKDGKLNVYWTMCTNNMQAGPNINEERMPGWRDPRNFIIVSDPYPTVSALAADLILPTAMWVEKEGAYGNAERRTQFWRQQVQAPGEAKSDLWQLVQFSRRFKTEEVWPEELLAKKPELRGKTLYEVLYATPEVSKFPLSELAEDQLNDESRELGFYLQKGLFEEYAWFGRGHGHDLAPFDDYHKARGLRWPVVNGKETQWRYSEGNDPYVKAGEGYKFYGKPDGKAVIFALPFEPAAEAPDEEYDLWLSTGRVLEHWHTGSMTRRVPELHRAFPEAVLFIHPLDAKARDLRRGDKVKVVSRRGEVISIVETRGRNRPPQGLVYMPFFDAAQLVNKLTLDATDPLSKETDFKKCAVKLEKV</sequence>
<accession>B1LKV2</accession>
<comment type="function">
    <text evidence="1">Catalytic subunit of the periplasmic nitrate reductase complex NapAB. Receives electrons from NapB and catalyzes the reduction of nitrate to nitrite.</text>
</comment>
<comment type="catalytic activity">
    <reaction evidence="1">
        <text>2 Fe(II)-[cytochrome] + nitrate + 2 H(+) = 2 Fe(III)-[cytochrome] + nitrite + H2O</text>
        <dbReference type="Rhea" id="RHEA:12909"/>
        <dbReference type="Rhea" id="RHEA-COMP:11777"/>
        <dbReference type="Rhea" id="RHEA-COMP:11778"/>
        <dbReference type="ChEBI" id="CHEBI:15377"/>
        <dbReference type="ChEBI" id="CHEBI:15378"/>
        <dbReference type="ChEBI" id="CHEBI:16301"/>
        <dbReference type="ChEBI" id="CHEBI:17632"/>
        <dbReference type="ChEBI" id="CHEBI:29033"/>
        <dbReference type="ChEBI" id="CHEBI:29034"/>
        <dbReference type="EC" id="1.9.6.1"/>
    </reaction>
</comment>
<comment type="cofactor">
    <cofactor evidence="1">
        <name>[4Fe-4S] cluster</name>
        <dbReference type="ChEBI" id="CHEBI:49883"/>
    </cofactor>
    <text evidence="1">Binds 1 [4Fe-4S] cluster.</text>
</comment>
<comment type="cofactor">
    <cofactor evidence="1">
        <name>Mo-bis(molybdopterin guanine dinucleotide)</name>
        <dbReference type="ChEBI" id="CHEBI:60539"/>
    </cofactor>
    <text evidence="1">Binds 1 molybdenum-bis(molybdopterin guanine dinucleotide) (Mo-bis-MGD) cofactor per subunit.</text>
</comment>
<comment type="subunit">
    <text evidence="1">Component of the periplasmic nitrate reductase NapAB complex composed of NapA and NapB.</text>
</comment>
<comment type="subcellular location">
    <subcellularLocation>
        <location evidence="1">Periplasm</location>
    </subcellularLocation>
</comment>
<comment type="PTM">
    <text evidence="1">Predicted to be exported by the Tat system. The position of the signal peptide cleavage has not been experimentally proven.</text>
</comment>
<comment type="similarity">
    <text evidence="1">Belongs to the prokaryotic molybdopterin-containing oxidoreductase family. NasA/NapA/NarB subfamily.</text>
</comment>
<dbReference type="EC" id="1.9.6.1" evidence="1"/>
<dbReference type="EMBL" id="CP000970">
    <property type="protein sequence ID" value="ACB15839.1"/>
    <property type="molecule type" value="Genomic_DNA"/>
</dbReference>
<dbReference type="RefSeq" id="WP_000778064.1">
    <property type="nucleotide sequence ID" value="NC_010498.1"/>
</dbReference>
<dbReference type="SMR" id="B1LKV2"/>
<dbReference type="KEGG" id="ecm:EcSMS35_2354"/>
<dbReference type="HOGENOM" id="CLU_000422_13_4_6"/>
<dbReference type="Proteomes" id="UP000007011">
    <property type="component" value="Chromosome"/>
</dbReference>
<dbReference type="GO" id="GO:0016020">
    <property type="term" value="C:membrane"/>
    <property type="evidence" value="ECO:0007669"/>
    <property type="project" value="TreeGrafter"/>
</dbReference>
<dbReference type="GO" id="GO:0009325">
    <property type="term" value="C:nitrate reductase complex"/>
    <property type="evidence" value="ECO:0007669"/>
    <property type="project" value="TreeGrafter"/>
</dbReference>
<dbReference type="GO" id="GO:0042597">
    <property type="term" value="C:periplasmic space"/>
    <property type="evidence" value="ECO:0007669"/>
    <property type="project" value="UniProtKB-SubCell"/>
</dbReference>
<dbReference type="GO" id="GO:0051539">
    <property type="term" value="F:4 iron, 4 sulfur cluster binding"/>
    <property type="evidence" value="ECO:0007669"/>
    <property type="project" value="UniProtKB-KW"/>
</dbReference>
<dbReference type="GO" id="GO:0009055">
    <property type="term" value="F:electron transfer activity"/>
    <property type="evidence" value="ECO:0007669"/>
    <property type="project" value="UniProtKB-UniRule"/>
</dbReference>
<dbReference type="GO" id="GO:0005506">
    <property type="term" value="F:iron ion binding"/>
    <property type="evidence" value="ECO:0007669"/>
    <property type="project" value="UniProtKB-UniRule"/>
</dbReference>
<dbReference type="GO" id="GO:0030151">
    <property type="term" value="F:molybdenum ion binding"/>
    <property type="evidence" value="ECO:0007669"/>
    <property type="project" value="InterPro"/>
</dbReference>
<dbReference type="GO" id="GO:0043546">
    <property type="term" value="F:molybdopterin cofactor binding"/>
    <property type="evidence" value="ECO:0007669"/>
    <property type="project" value="InterPro"/>
</dbReference>
<dbReference type="GO" id="GO:0050140">
    <property type="term" value="F:nitrate reductase (cytochrome) activity"/>
    <property type="evidence" value="ECO:0007669"/>
    <property type="project" value="UniProtKB-EC"/>
</dbReference>
<dbReference type="GO" id="GO:0045333">
    <property type="term" value="P:cellular respiration"/>
    <property type="evidence" value="ECO:0007669"/>
    <property type="project" value="UniProtKB-ARBA"/>
</dbReference>
<dbReference type="GO" id="GO:0006777">
    <property type="term" value="P:Mo-molybdopterin cofactor biosynthetic process"/>
    <property type="evidence" value="ECO:0007669"/>
    <property type="project" value="UniProtKB-UniRule"/>
</dbReference>
<dbReference type="GO" id="GO:0042128">
    <property type="term" value="P:nitrate assimilation"/>
    <property type="evidence" value="ECO:0007669"/>
    <property type="project" value="UniProtKB-UniRule"/>
</dbReference>
<dbReference type="CDD" id="cd02791">
    <property type="entry name" value="MopB_CT_Nitrate-R-NapA-like"/>
    <property type="match status" value="1"/>
</dbReference>
<dbReference type="CDD" id="cd02754">
    <property type="entry name" value="MopB_Nitrate-R-NapA-like"/>
    <property type="match status" value="1"/>
</dbReference>
<dbReference type="FunFam" id="2.40.40.20:FF:000005">
    <property type="entry name" value="Periplasmic nitrate reductase"/>
    <property type="match status" value="1"/>
</dbReference>
<dbReference type="FunFam" id="3.40.228.10:FF:000001">
    <property type="entry name" value="Periplasmic nitrate reductase"/>
    <property type="match status" value="1"/>
</dbReference>
<dbReference type="Gene3D" id="2.40.40.20">
    <property type="match status" value="1"/>
</dbReference>
<dbReference type="Gene3D" id="3.30.200.210">
    <property type="match status" value="1"/>
</dbReference>
<dbReference type="Gene3D" id="3.40.50.740">
    <property type="match status" value="1"/>
</dbReference>
<dbReference type="Gene3D" id="3.40.228.10">
    <property type="entry name" value="Dimethylsulfoxide Reductase, domain 2"/>
    <property type="match status" value="1"/>
</dbReference>
<dbReference type="HAMAP" id="MF_01630">
    <property type="entry name" value="Nitrate_reduct_NapA"/>
    <property type="match status" value="1"/>
</dbReference>
<dbReference type="InterPro" id="IPR009010">
    <property type="entry name" value="Asp_de-COase-like_dom_sf"/>
</dbReference>
<dbReference type="InterPro" id="IPR041957">
    <property type="entry name" value="CT_Nitrate-R-NapA-like"/>
</dbReference>
<dbReference type="InterPro" id="IPR006657">
    <property type="entry name" value="MoPterin_dinucl-bd_dom"/>
</dbReference>
<dbReference type="InterPro" id="IPR006656">
    <property type="entry name" value="Mopterin_OxRdtase"/>
</dbReference>
<dbReference type="InterPro" id="IPR006963">
    <property type="entry name" value="Mopterin_OxRdtase_4Fe-4S_dom"/>
</dbReference>
<dbReference type="InterPro" id="IPR027467">
    <property type="entry name" value="MopterinOxRdtase_cofactor_BS"/>
</dbReference>
<dbReference type="InterPro" id="IPR010051">
    <property type="entry name" value="Periplasm_NO3_reductase_lsu"/>
</dbReference>
<dbReference type="InterPro" id="IPR050123">
    <property type="entry name" value="Prok_molybdopt-oxidoreductase"/>
</dbReference>
<dbReference type="InterPro" id="IPR006311">
    <property type="entry name" value="TAT_signal"/>
</dbReference>
<dbReference type="InterPro" id="IPR019546">
    <property type="entry name" value="TAT_signal_bac_arc"/>
</dbReference>
<dbReference type="NCBIfam" id="TIGR01706">
    <property type="entry name" value="NAPA"/>
    <property type="match status" value="1"/>
</dbReference>
<dbReference type="NCBIfam" id="NF010055">
    <property type="entry name" value="PRK13532.1"/>
    <property type="match status" value="1"/>
</dbReference>
<dbReference type="NCBIfam" id="TIGR01409">
    <property type="entry name" value="TAT_signal_seq"/>
    <property type="match status" value="1"/>
</dbReference>
<dbReference type="PANTHER" id="PTHR43105:SF11">
    <property type="entry name" value="PERIPLASMIC NITRATE REDUCTASE"/>
    <property type="match status" value="1"/>
</dbReference>
<dbReference type="PANTHER" id="PTHR43105">
    <property type="entry name" value="RESPIRATORY NITRATE REDUCTASE"/>
    <property type="match status" value="1"/>
</dbReference>
<dbReference type="Pfam" id="PF04879">
    <property type="entry name" value="Molybdop_Fe4S4"/>
    <property type="match status" value="1"/>
</dbReference>
<dbReference type="Pfam" id="PF00384">
    <property type="entry name" value="Molybdopterin"/>
    <property type="match status" value="1"/>
</dbReference>
<dbReference type="Pfam" id="PF01568">
    <property type="entry name" value="Molydop_binding"/>
    <property type="match status" value="1"/>
</dbReference>
<dbReference type="SMART" id="SM00926">
    <property type="entry name" value="Molybdop_Fe4S4"/>
    <property type="match status" value="1"/>
</dbReference>
<dbReference type="SUPFAM" id="SSF50692">
    <property type="entry name" value="ADC-like"/>
    <property type="match status" value="1"/>
</dbReference>
<dbReference type="SUPFAM" id="SSF53706">
    <property type="entry name" value="Formate dehydrogenase/DMSO reductase, domains 1-3"/>
    <property type="match status" value="1"/>
</dbReference>
<dbReference type="PROSITE" id="PS51669">
    <property type="entry name" value="4FE4S_MOW_BIS_MGD"/>
    <property type="match status" value="1"/>
</dbReference>
<dbReference type="PROSITE" id="PS00551">
    <property type="entry name" value="MOLYBDOPTERIN_PROK_1"/>
    <property type="match status" value="1"/>
</dbReference>
<dbReference type="PROSITE" id="PS51318">
    <property type="entry name" value="TAT"/>
    <property type="match status" value="1"/>
</dbReference>
<name>NAPA_ECOSM</name>
<reference key="1">
    <citation type="journal article" date="2008" name="J. Bacteriol.">
        <title>Insights into the environmental resistance gene pool from the genome sequence of the multidrug-resistant environmental isolate Escherichia coli SMS-3-5.</title>
        <authorList>
            <person name="Fricke W.F."/>
            <person name="Wright M.S."/>
            <person name="Lindell A.H."/>
            <person name="Harkins D.M."/>
            <person name="Baker-Austin C."/>
            <person name="Ravel J."/>
            <person name="Stepanauskas R."/>
        </authorList>
    </citation>
    <scope>NUCLEOTIDE SEQUENCE [LARGE SCALE GENOMIC DNA]</scope>
    <source>
        <strain>SMS-3-5 / SECEC</strain>
    </source>
</reference>
<keyword id="KW-0004">4Fe-4S</keyword>
<keyword id="KW-0249">Electron transport</keyword>
<keyword id="KW-0408">Iron</keyword>
<keyword id="KW-0411">Iron-sulfur</keyword>
<keyword id="KW-0479">Metal-binding</keyword>
<keyword id="KW-0500">Molybdenum</keyword>
<keyword id="KW-0534">Nitrate assimilation</keyword>
<keyword id="KW-0560">Oxidoreductase</keyword>
<keyword id="KW-0574">Periplasm</keyword>
<keyword id="KW-0732">Signal</keyword>
<keyword id="KW-0813">Transport</keyword>
<gene>
    <name evidence="1" type="primary">napA</name>
    <name type="ordered locus">EcSMS35_2354</name>
</gene>
<organism>
    <name type="scientific">Escherichia coli (strain SMS-3-5 / SECEC)</name>
    <dbReference type="NCBI Taxonomy" id="439855"/>
    <lineage>
        <taxon>Bacteria</taxon>
        <taxon>Pseudomonadati</taxon>
        <taxon>Pseudomonadota</taxon>
        <taxon>Gammaproteobacteria</taxon>
        <taxon>Enterobacterales</taxon>
        <taxon>Enterobacteriaceae</taxon>
        <taxon>Escherichia</taxon>
    </lineage>
</organism>
<feature type="signal peptide" description="Tat-type signal" evidence="1">
    <location>
        <begin position="1"/>
        <end position="31"/>
    </location>
</feature>
<feature type="chain" id="PRO_1000186363" description="Periplasmic nitrate reductase" evidence="1">
    <location>
        <begin position="32"/>
        <end position="828"/>
    </location>
</feature>
<feature type="domain" description="4Fe-4S Mo/W bis-MGD-type" evidence="1">
    <location>
        <begin position="39"/>
        <end position="95"/>
    </location>
</feature>
<feature type="binding site" evidence="1">
    <location>
        <position position="46"/>
    </location>
    <ligand>
        <name>[4Fe-4S] cluster</name>
        <dbReference type="ChEBI" id="CHEBI:49883"/>
    </ligand>
</feature>
<feature type="binding site" evidence="1">
    <location>
        <position position="49"/>
    </location>
    <ligand>
        <name>[4Fe-4S] cluster</name>
        <dbReference type="ChEBI" id="CHEBI:49883"/>
    </ligand>
</feature>
<feature type="binding site" evidence="1">
    <location>
        <position position="53"/>
    </location>
    <ligand>
        <name>[4Fe-4S] cluster</name>
        <dbReference type="ChEBI" id="CHEBI:49883"/>
    </ligand>
</feature>
<feature type="binding site" evidence="1">
    <location>
        <position position="81"/>
    </location>
    <ligand>
        <name>[4Fe-4S] cluster</name>
        <dbReference type="ChEBI" id="CHEBI:49883"/>
    </ligand>
</feature>
<feature type="binding site" evidence="1">
    <location>
        <position position="83"/>
    </location>
    <ligand>
        <name>Mo-bis(molybdopterin guanine dinucleotide)</name>
        <dbReference type="ChEBI" id="CHEBI:60539"/>
    </ligand>
</feature>
<feature type="binding site" evidence="1">
    <location>
        <position position="150"/>
    </location>
    <ligand>
        <name>Mo-bis(molybdopterin guanine dinucleotide)</name>
        <dbReference type="ChEBI" id="CHEBI:60539"/>
    </ligand>
</feature>
<feature type="binding site" evidence="1">
    <location>
        <position position="175"/>
    </location>
    <ligand>
        <name>Mo-bis(molybdopterin guanine dinucleotide)</name>
        <dbReference type="ChEBI" id="CHEBI:60539"/>
    </ligand>
</feature>
<feature type="binding site" evidence="1">
    <location>
        <position position="179"/>
    </location>
    <ligand>
        <name>Mo-bis(molybdopterin guanine dinucleotide)</name>
        <dbReference type="ChEBI" id="CHEBI:60539"/>
    </ligand>
</feature>
<feature type="binding site" evidence="1">
    <location>
        <begin position="212"/>
        <end position="219"/>
    </location>
    <ligand>
        <name>Mo-bis(molybdopterin guanine dinucleotide)</name>
        <dbReference type="ChEBI" id="CHEBI:60539"/>
    </ligand>
</feature>
<feature type="binding site" evidence="1">
    <location>
        <begin position="243"/>
        <end position="247"/>
    </location>
    <ligand>
        <name>Mo-bis(molybdopterin guanine dinucleotide)</name>
        <dbReference type="ChEBI" id="CHEBI:60539"/>
    </ligand>
</feature>
<feature type="binding site" evidence="1">
    <location>
        <begin position="262"/>
        <end position="264"/>
    </location>
    <ligand>
        <name>Mo-bis(molybdopterin guanine dinucleotide)</name>
        <dbReference type="ChEBI" id="CHEBI:60539"/>
    </ligand>
</feature>
<feature type="binding site" evidence="1">
    <location>
        <position position="372"/>
    </location>
    <ligand>
        <name>Mo-bis(molybdopterin guanine dinucleotide)</name>
        <dbReference type="ChEBI" id="CHEBI:60539"/>
    </ligand>
</feature>
<feature type="binding site" evidence="1">
    <location>
        <position position="376"/>
    </location>
    <ligand>
        <name>Mo-bis(molybdopterin guanine dinucleotide)</name>
        <dbReference type="ChEBI" id="CHEBI:60539"/>
    </ligand>
</feature>
<feature type="binding site" evidence="1">
    <location>
        <position position="482"/>
    </location>
    <ligand>
        <name>Mo-bis(molybdopterin guanine dinucleotide)</name>
        <dbReference type="ChEBI" id="CHEBI:60539"/>
    </ligand>
</feature>
<feature type="binding site" evidence="1">
    <location>
        <begin position="508"/>
        <end position="509"/>
    </location>
    <ligand>
        <name>Mo-bis(molybdopterin guanine dinucleotide)</name>
        <dbReference type="ChEBI" id="CHEBI:60539"/>
    </ligand>
</feature>
<feature type="binding site" evidence="1">
    <location>
        <position position="531"/>
    </location>
    <ligand>
        <name>Mo-bis(molybdopterin guanine dinucleotide)</name>
        <dbReference type="ChEBI" id="CHEBI:60539"/>
    </ligand>
</feature>
<feature type="binding site" evidence="1">
    <location>
        <position position="558"/>
    </location>
    <ligand>
        <name>Mo-bis(molybdopterin guanine dinucleotide)</name>
        <dbReference type="ChEBI" id="CHEBI:60539"/>
    </ligand>
</feature>
<feature type="binding site" evidence="1">
    <location>
        <begin position="718"/>
        <end position="727"/>
    </location>
    <ligand>
        <name>Mo-bis(molybdopterin guanine dinucleotide)</name>
        <dbReference type="ChEBI" id="CHEBI:60539"/>
    </ligand>
</feature>
<feature type="binding site" evidence="1">
    <location>
        <position position="794"/>
    </location>
    <ligand>
        <name>substrate</name>
    </ligand>
</feature>
<feature type="binding site" evidence="1">
    <location>
        <position position="802"/>
    </location>
    <ligand>
        <name>Mo-bis(molybdopterin guanine dinucleotide)</name>
        <dbReference type="ChEBI" id="CHEBI:60539"/>
    </ligand>
</feature>
<feature type="binding site" evidence="1">
    <location>
        <position position="819"/>
    </location>
    <ligand>
        <name>Mo-bis(molybdopterin guanine dinucleotide)</name>
        <dbReference type="ChEBI" id="CHEBI:60539"/>
    </ligand>
</feature>
<evidence type="ECO:0000255" key="1">
    <source>
        <dbReference type="HAMAP-Rule" id="MF_01630"/>
    </source>
</evidence>
<protein>
    <recommendedName>
        <fullName evidence="1">Periplasmic nitrate reductase</fullName>
        <ecNumber evidence="1">1.9.6.1</ecNumber>
    </recommendedName>
</protein>
<proteinExistence type="inferred from homology"/>